<gene>
    <name evidence="1" type="primary">rpsQ</name>
    <name type="ordered locus">SPG_0204</name>
</gene>
<name>RS17_STRP4</name>
<accession>B5E6G4</accession>
<reference key="1">
    <citation type="journal article" date="2001" name="Microb. Drug Resist.">
        <title>Annotated draft genomic sequence from a Streptococcus pneumoniae type 19F clinical isolate.</title>
        <authorList>
            <person name="Dopazo J."/>
            <person name="Mendoza A."/>
            <person name="Herrero J."/>
            <person name="Caldara F."/>
            <person name="Humbert Y."/>
            <person name="Friedli L."/>
            <person name="Guerrier M."/>
            <person name="Grand-Schenk E."/>
            <person name="Gandin C."/>
            <person name="de Francesco M."/>
            <person name="Polissi A."/>
            <person name="Buell G."/>
            <person name="Feger G."/>
            <person name="Garcia E."/>
            <person name="Peitsch M."/>
            <person name="Garcia-Bustos J.F."/>
        </authorList>
    </citation>
    <scope>NUCLEOTIDE SEQUENCE [LARGE SCALE GENOMIC DNA]</scope>
    <source>
        <strain>G54</strain>
    </source>
</reference>
<reference key="2">
    <citation type="submission" date="2008-03" db="EMBL/GenBank/DDBJ databases">
        <title>Pneumococcal beta glucoside metabolism investigated by whole genome comparison.</title>
        <authorList>
            <person name="Mulas L."/>
            <person name="Trappetti C."/>
            <person name="Hakenbeck R."/>
            <person name="Iannelli F."/>
            <person name="Pozzi G."/>
            <person name="Davidsen T.M."/>
            <person name="Tettelin H."/>
            <person name="Oggioni M."/>
        </authorList>
    </citation>
    <scope>NUCLEOTIDE SEQUENCE [LARGE SCALE GENOMIC DNA]</scope>
    <source>
        <strain>G54</strain>
    </source>
</reference>
<feature type="chain" id="PRO_1000143309" description="Small ribosomal subunit protein uS17">
    <location>
        <begin position="1"/>
        <end position="86"/>
    </location>
</feature>
<sequence>MERNNRKVLVGRVVSDKMDKTITVVVETKRNHPVYGKRINYSKKYKAHDENNVAKEGDIVRIMETRPLSATKRFRLVEVVEEAVII</sequence>
<proteinExistence type="inferred from homology"/>
<dbReference type="EMBL" id="CP001015">
    <property type="protein sequence ID" value="ACF56731.1"/>
    <property type="molecule type" value="Genomic_DNA"/>
</dbReference>
<dbReference type="SMR" id="B5E6G4"/>
<dbReference type="KEGG" id="spx:SPG_0204"/>
<dbReference type="HOGENOM" id="CLU_073626_1_0_9"/>
<dbReference type="GO" id="GO:0022627">
    <property type="term" value="C:cytosolic small ribosomal subunit"/>
    <property type="evidence" value="ECO:0007669"/>
    <property type="project" value="TreeGrafter"/>
</dbReference>
<dbReference type="GO" id="GO:0019843">
    <property type="term" value="F:rRNA binding"/>
    <property type="evidence" value="ECO:0007669"/>
    <property type="project" value="UniProtKB-UniRule"/>
</dbReference>
<dbReference type="GO" id="GO:0003735">
    <property type="term" value="F:structural constituent of ribosome"/>
    <property type="evidence" value="ECO:0007669"/>
    <property type="project" value="InterPro"/>
</dbReference>
<dbReference type="GO" id="GO:0006412">
    <property type="term" value="P:translation"/>
    <property type="evidence" value="ECO:0007669"/>
    <property type="project" value="UniProtKB-UniRule"/>
</dbReference>
<dbReference type="CDD" id="cd00364">
    <property type="entry name" value="Ribosomal_uS17"/>
    <property type="match status" value="1"/>
</dbReference>
<dbReference type="FunFam" id="2.40.50.140:FF:000026">
    <property type="entry name" value="30S ribosomal protein S17"/>
    <property type="match status" value="1"/>
</dbReference>
<dbReference type="Gene3D" id="2.40.50.140">
    <property type="entry name" value="Nucleic acid-binding proteins"/>
    <property type="match status" value="1"/>
</dbReference>
<dbReference type="HAMAP" id="MF_01345_B">
    <property type="entry name" value="Ribosomal_uS17_B"/>
    <property type="match status" value="1"/>
</dbReference>
<dbReference type="InterPro" id="IPR012340">
    <property type="entry name" value="NA-bd_OB-fold"/>
</dbReference>
<dbReference type="InterPro" id="IPR000266">
    <property type="entry name" value="Ribosomal_uS17"/>
</dbReference>
<dbReference type="InterPro" id="IPR019984">
    <property type="entry name" value="Ribosomal_uS17_bact/chlr"/>
</dbReference>
<dbReference type="InterPro" id="IPR019979">
    <property type="entry name" value="Ribosomal_uS17_CS"/>
</dbReference>
<dbReference type="NCBIfam" id="NF004123">
    <property type="entry name" value="PRK05610.1"/>
    <property type="match status" value="1"/>
</dbReference>
<dbReference type="NCBIfam" id="TIGR03635">
    <property type="entry name" value="uS17_bact"/>
    <property type="match status" value="1"/>
</dbReference>
<dbReference type="PANTHER" id="PTHR10744">
    <property type="entry name" value="40S RIBOSOMAL PROTEIN S11 FAMILY MEMBER"/>
    <property type="match status" value="1"/>
</dbReference>
<dbReference type="PANTHER" id="PTHR10744:SF1">
    <property type="entry name" value="SMALL RIBOSOMAL SUBUNIT PROTEIN US17M"/>
    <property type="match status" value="1"/>
</dbReference>
<dbReference type="Pfam" id="PF00366">
    <property type="entry name" value="Ribosomal_S17"/>
    <property type="match status" value="1"/>
</dbReference>
<dbReference type="PRINTS" id="PR00973">
    <property type="entry name" value="RIBOSOMALS17"/>
</dbReference>
<dbReference type="SUPFAM" id="SSF50249">
    <property type="entry name" value="Nucleic acid-binding proteins"/>
    <property type="match status" value="1"/>
</dbReference>
<dbReference type="PROSITE" id="PS00056">
    <property type="entry name" value="RIBOSOMAL_S17"/>
    <property type="match status" value="1"/>
</dbReference>
<keyword id="KW-0687">Ribonucleoprotein</keyword>
<keyword id="KW-0689">Ribosomal protein</keyword>
<keyword id="KW-0694">RNA-binding</keyword>
<keyword id="KW-0699">rRNA-binding</keyword>
<organism>
    <name type="scientific">Streptococcus pneumoniae serotype 19F (strain G54)</name>
    <dbReference type="NCBI Taxonomy" id="512566"/>
    <lineage>
        <taxon>Bacteria</taxon>
        <taxon>Bacillati</taxon>
        <taxon>Bacillota</taxon>
        <taxon>Bacilli</taxon>
        <taxon>Lactobacillales</taxon>
        <taxon>Streptococcaceae</taxon>
        <taxon>Streptococcus</taxon>
    </lineage>
</organism>
<protein>
    <recommendedName>
        <fullName evidence="1">Small ribosomal subunit protein uS17</fullName>
    </recommendedName>
    <alternativeName>
        <fullName evidence="2">30S ribosomal protein S17</fullName>
    </alternativeName>
</protein>
<comment type="function">
    <text evidence="1">One of the primary rRNA binding proteins, it binds specifically to the 5'-end of 16S ribosomal RNA.</text>
</comment>
<comment type="subunit">
    <text evidence="1">Part of the 30S ribosomal subunit.</text>
</comment>
<comment type="similarity">
    <text evidence="1">Belongs to the universal ribosomal protein uS17 family.</text>
</comment>
<evidence type="ECO:0000255" key="1">
    <source>
        <dbReference type="HAMAP-Rule" id="MF_01345"/>
    </source>
</evidence>
<evidence type="ECO:0000305" key="2"/>